<keyword id="KW-1185">Reference proteome</keyword>
<keyword id="KW-0687">Ribonucleoprotein</keyword>
<keyword id="KW-0689">Ribosomal protein</keyword>
<keyword id="KW-0694">RNA-binding</keyword>
<keyword id="KW-0699">rRNA-binding</keyword>
<reference key="1">
    <citation type="journal article" date="2016" name="Genome Announc.">
        <title>Complete genome sequence of Alkaliphilus metalliredigens strain QYMF, an alkaliphilic and metal-reducing bacterium isolated from borax-contaminated leachate ponds.</title>
        <authorList>
            <person name="Hwang C."/>
            <person name="Copeland A."/>
            <person name="Lucas S."/>
            <person name="Lapidus A."/>
            <person name="Barry K."/>
            <person name="Detter J.C."/>
            <person name="Glavina Del Rio T."/>
            <person name="Hammon N."/>
            <person name="Israni S."/>
            <person name="Dalin E."/>
            <person name="Tice H."/>
            <person name="Pitluck S."/>
            <person name="Chertkov O."/>
            <person name="Brettin T."/>
            <person name="Bruce D."/>
            <person name="Han C."/>
            <person name="Schmutz J."/>
            <person name="Larimer F."/>
            <person name="Land M.L."/>
            <person name="Hauser L."/>
            <person name="Kyrpides N."/>
            <person name="Mikhailova N."/>
            <person name="Ye Q."/>
            <person name="Zhou J."/>
            <person name="Richardson P."/>
            <person name="Fields M.W."/>
        </authorList>
    </citation>
    <scope>NUCLEOTIDE SEQUENCE [LARGE SCALE GENOMIC DNA]</scope>
    <source>
        <strain>QYMF</strain>
    </source>
</reference>
<sequence>MERGSRKTRVGRVVSDKMDKTVVVLVEDFVRHPLYGKAMKRTNKFKTHDELNECGIGDKVKIMETKPLSKDKRWRLVQIVQKAK</sequence>
<name>RS17_ALKMQ</name>
<organism>
    <name type="scientific">Alkaliphilus metalliredigens (strain QYMF)</name>
    <dbReference type="NCBI Taxonomy" id="293826"/>
    <lineage>
        <taxon>Bacteria</taxon>
        <taxon>Bacillati</taxon>
        <taxon>Bacillota</taxon>
        <taxon>Clostridia</taxon>
        <taxon>Peptostreptococcales</taxon>
        <taxon>Natronincolaceae</taxon>
        <taxon>Alkaliphilus</taxon>
    </lineage>
</organism>
<protein>
    <recommendedName>
        <fullName evidence="1">Small ribosomal subunit protein uS17</fullName>
    </recommendedName>
    <alternativeName>
        <fullName evidence="2">30S ribosomal protein S17</fullName>
    </alternativeName>
</protein>
<evidence type="ECO:0000255" key="1">
    <source>
        <dbReference type="HAMAP-Rule" id="MF_01345"/>
    </source>
</evidence>
<evidence type="ECO:0000305" key="2"/>
<dbReference type="EMBL" id="CP000724">
    <property type="protein sequence ID" value="ABR50541.1"/>
    <property type="molecule type" value="Genomic_DNA"/>
</dbReference>
<dbReference type="RefSeq" id="WP_012065432.1">
    <property type="nucleotide sequence ID" value="NC_009633.1"/>
</dbReference>
<dbReference type="SMR" id="A6TWH3"/>
<dbReference type="STRING" id="293826.Amet_4469"/>
<dbReference type="KEGG" id="amt:Amet_4469"/>
<dbReference type="eggNOG" id="COG0186">
    <property type="taxonomic scope" value="Bacteria"/>
</dbReference>
<dbReference type="HOGENOM" id="CLU_073626_1_0_9"/>
<dbReference type="OrthoDB" id="9811714at2"/>
<dbReference type="Proteomes" id="UP000001572">
    <property type="component" value="Chromosome"/>
</dbReference>
<dbReference type="GO" id="GO:0022627">
    <property type="term" value="C:cytosolic small ribosomal subunit"/>
    <property type="evidence" value="ECO:0007669"/>
    <property type="project" value="TreeGrafter"/>
</dbReference>
<dbReference type="GO" id="GO:0019843">
    <property type="term" value="F:rRNA binding"/>
    <property type="evidence" value="ECO:0007669"/>
    <property type="project" value="UniProtKB-UniRule"/>
</dbReference>
<dbReference type="GO" id="GO:0003735">
    <property type="term" value="F:structural constituent of ribosome"/>
    <property type="evidence" value="ECO:0007669"/>
    <property type="project" value="InterPro"/>
</dbReference>
<dbReference type="GO" id="GO:0006412">
    <property type="term" value="P:translation"/>
    <property type="evidence" value="ECO:0007669"/>
    <property type="project" value="UniProtKB-UniRule"/>
</dbReference>
<dbReference type="CDD" id="cd00364">
    <property type="entry name" value="Ribosomal_uS17"/>
    <property type="match status" value="1"/>
</dbReference>
<dbReference type="Gene3D" id="2.40.50.140">
    <property type="entry name" value="Nucleic acid-binding proteins"/>
    <property type="match status" value="1"/>
</dbReference>
<dbReference type="HAMAP" id="MF_01345_B">
    <property type="entry name" value="Ribosomal_uS17_B"/>
    <property type="match status" value="1"/>
</dbReference>
<dbReference type="InterPro" id="IPR012340">
    <property type="entry name" value="NA-bd_OB-fold"/>
</dbReference>
<dbReference type="InterPro" id="IPR000266">
    <property type="entry name" value="Ribosomal_uS17"/>
</dbReference>
<dbReference type="InterPro" id="IPR019984">
    <property type="entry name" value="Ribosomal_uS17_bact/chlr"/>
</dbReference>
<dbReference type="InterPro" id="IPR019979">
    <property type="entry name" value="Ribosomal_uS17_CS"/>
</dbReference>
<dbReference type="NCBIfam" id="NF004123">
    <property type="entry name" value="PRK05610.1"/>
    <property type="match status" value="1"/>
</dbReference>
<dbReference type="NCBIfam" id="TIGR03635">
    <property type="entry name" value="uS17_bact"/>
    <property type="match status" value="1"/>
</dbReference>
<dbReference type="PANTHER" id="PTHR10744">
    <property type="entry name" value="40S RIBOSOMAL PROTEIN S11 FAMILY MEMBER"/>
    <property type="match status" value="1"/>
</dbReference>
<dbReference type="PANTHER" id="PTHR10744:SF1">
    <property type="entry name" value="SMALL RIBOSOMAL SUBUNIT PROTEIN US17M"/>
    <property type="match status" value="1"/>
</dbReference>
<dbReference type="Pfam" id="PF00366">
    <property type="entry name" value="Ribosomal_S17"/>
    <property type="match status" value="1"/>
</dbReference>
<dbReference type="PRINTS" id="PR00973">
    <property type="entry name" value="RIBOSOMALS17"/>
</dbReference>
<dbReference type="SUPFAM" id="SSF50249">
    <property type="entry name" value="Nucleic acid-binding proteins"/>
    <property type="match status" value="1"/>
</dbReference>
<dbReference type="PROSITE" id="PS00056">
    <property type="entry name" value="RIBOSOMAL_S17"/>
    <property type="match status" value="1"/>
</dbReference>
<feature type="chain" id="PRO_1000067696" description="Small ribosomal subunit protein uS17">
    <location>
        <begin position="1"/>
        <end position="84"/>
    </location>
</feature>
<proteinExistence type="inferred from homology"/>
<gene>
    <name evidence="1" type="primary">rpsQ</name>
    <name type="ordered locus">Amet_4469</name>
</gene>
<comment type="function">
    <text evidence="1">One of the primary rRNA binding proteins, it binds specifically to the 5'-end of 16S ribosomal RNA.</text>
</comment>
<comment type="subunit">
    <text evidence="1">Part of the 30S ribosomal subunit.</text>
</comment>
<comment type="similarity">
    <text evidence="1">Belongs to the universal ribosomal protein uS17 family.</text>
</comment>
<accession>A6TWH3</accession>